<comment type="catalytic activity">
    <reaction evidence="1">
        <text>tRNA(Leu) + L-leucine + ATP = L-leucyl-tRNA(Leu) + AMP + diphosphate</text>
        <dbReference type="Rhea" id="RHEA:11688"/>
        <dbReference type="Rhea" id="RHEA-COMP:9613"/>
        <dbReference type="Rhea" id="RHEA-COMP:9622"/>
        <dbReference type="ChEBI" id="CHEBI:30616"/>
        <dbReference type="ChEBI" id="CHEBI:33019"/>
        <dbReference type="ChEBI" id="CHEBI:57427"/>
        <dbReference type="ChEBI" id="CHEBI:78442"/>
        <dbReference type="ChEBI" id="CHEBI:78494"/>
        <dbReference type="ChEBI" id="CHEBI:456215"/>
        <dbReference type="EC" id="6.1.1.4"/>
    </reaction>
</comment>
<comment type="subcellular location">
    <subcellularLocation>
        <location evidence="1">Cytoplasm</location>
    </subcellularLocation>
</comment>
<comment type="similarity">
    <text evidence="1">Belongs to the class-I aminoacyl-tRNA synthetase family.</text>
</comment>
<keyword id="KW-0030">Aminoacyl-tRNA synthetase</keyword>
<keyword id="KW-0067">ATP-binding</keyword>
<keyword id="KW-0963">Cytoplasm</keyword>
<keyword id="KW-0436">Ligase</keyword>
<keyword id="KW-0547">Nucleotide-binding</keyword>
<keyword id="KW-0648">Protein biosynthesis</keyword>
<gene>
    <name evidence="1" type="primary">leuS</name>
    <name type="ordered locus">PMT9312_0911</name>
</gene>
<evidence type="ECO:0000255" key="1">
    <source>
        <dbReference type="HAMAP-Rule" id="MF_00049"/>
    </source>
</evidence>
<protein>
    <recommendedName>
        <fullName evidence="1">Leucine--tRNA ligase</fullName>
        <ecNumber evidence="1">6.1.1.4</ecNumber>
    </recommendedName>
    <alternativeName>
        <fullName evidence="1">Leucyl-tRNA synthetase</fullName>
        <shortName evidence="1">LeuRS</shortName>
    </alternativeName>
</protein>
<reference key="1">
    <citation type="journal article" date="2006" name="Science">
        <title>Genomic islands and the ecology and evolution of Prochlorococcus.</title>
        <authorList>
            <person name="Coleman M.L."/>
            <person name="Sullivan M.B."/>
            <person name="Martiny A.C."/>
            <person name="Steglich C."/>
            <person name="Barry K."/>
            <person name="Delong E.F."/>
            <person name="Chisholm S.W."/>
        </authorList>
    </citation>
    <scope>NUCLEOTIDE SEQUENCE [LARGE SCALE GENOMIC DNA]</scope>
    <source>
        <strain>MIT 9312</strain>
    </source>
</reference>
<dbReference type="EC" id="6.1.1.4" evidence="1"/>
<dbReference type="EMBL" id="CP000111">
    <property type="protein sequence ID" value="ABB49971.1"/>
    <property type="molecule type" value="Genomic_DNA"/>
</dbReference>
<dbReference type="RefSeq" id="WP_011376465.1">
    <property type="nucleotide sequence ID" value="NC_007577.1"/>
</dbReference>
<dbReference type="SMR" id="Q31AX4"/>
<dbReference type="STRING" id="74546.PMT9312_0911"/>
<dbReference type="KEGG" id="pmi:PMT9312_0911"/>
<dbReference type="eggNOG" id="COG0495">
    <property type="taxonomic scope" value="Bacteria"/>
</dbReference>
<dbReference type="HOGENOM" id="CLU_004427_0_0_3"/>
<dbReference type="OrthoDB" id="9810365at2"/>
<dbReference type="Proteomes" id="UP000002715">
    <property type="component" value="Chromosome"/>
</dbReference>
<dbReference type="GO" id="GO:0005829">
    <property type="term" value="C:cytosol"/>
    <property type="evidence" value="ECO:0007669"/>
    <property type="project" value="TreeGrafter"/>
</dbReference>
<dbReference type="GO" id="GO:0002161">
    <property type="term" value="F:aminoacyl-tRNA deacylase activity"/>
    <property type="evidence" value="ECO:0007669"/>
    <property type="project" value="InterPro"/>
</dbReference>
<dbReference type="GO" id="GO:0005524">
    <property type="term" value="F:ATP binding"/>
    <property type="evidence" value="ECO:0007669"/>
    <property type="project" value="UniProtKB-UniRule"/>
</dbReference>
<dbReference type="GO" id="GO:0004823">
    <property type="term" value="F:leucine-tRNA ligase activity"/>
    <property type="evidence" value="ECO:0007669"/>
    <property type="project" value="UniProtKB-UniRule"/>
</dbReference>
<dbReference type="GO" id="GO:0006429">
    <property type="term" value="P:leucyl-tRNA aminoacylation"/>
    <property type="evidence" value="ECO:0007669"/>
    <property type="project" value="UniProtKB-UniRule"/>
</dbReference>
<dbReference type="CDD" id="cd07958">
    <property type="entry name" value="Anticodon_Ia_Leu_BEm"/>
    <property type="match status" value="1"/>
</dbReference>
<dbReference type="CDD" id="cd00812">
    <property type="entry name" value="LeuRS_core"/>
    <property type="match status" value="1"/>
</dbReference>
<dbReference type="FunFam" id="3.40.50.620:FF:000003">
    <property type="entry name" value="Leucine--tRNA ligase"/>
    <property type="match status" value="1"/>
</dbReference>
<dbReference type="FunFam" id="1.10.730.10:FF:000011">
    <property type="entry name" value="Leucine--tRNA ligase chloroplastic/mitochondrial"/>
    <property type="match status" value="1"/>
</dbReference>
<dbReference type="Gene3D" id="3.40.50.620">
    <property type="entry name" value="HUPs"/>
    <property type="match status" value="2"/>
</dbReference>
<dbReference type="Gene3D" id="1.10.730.10">
    <property type="entry name" value="Isoleucyl-tRNA Synthetase, Domain 1"/>
    <property type="match status" value="1"/>
</dbReference>
<dbReference type="HAMAP" id="MF_00049_B">
    <property type="entry name" value="Leu_tRNA_synth_B"/>
    <property type="match status" value="1"/>
</dbReference>
<dbReference type="InterPro" id="IPR001412">
    <property type="entry name" value="aa-tRNA-synth_I_CS"/>
</dbReference>
<dbReference type="InterPro" id="IPR002300">
    <property type="entry name" value="aa-tRNA-synth_Ia"/>
</dbReference>
<dbReference type="InterPro" id="IPR002302">
    <property type="entry name" value="Leu-tRNA-ligase"/>
</dbReference>
<dbReference type="InterPro" id="IPR025709">
    <property type="entry name" value="Leu_tRNA-synth_edit"/>
</dbReference>
<dbReference type="InterPro" id="IPR013155">
    <property type="entry name" value="M/V/L/I-tRNA-synth_anticd-bd"/>
</dbReference>
<dbReference type="InterPro" id="IPR015413">
    <property type="entry name" value="Methionyl/Leucyl_tRNA_Synth"/>
</dbReference>
<dbReference type="InterPro" id="IPR014729">
    <property type="entry name" value="Rossmann-like_a/b/a_fold"/>
</dbReference>
<dbReference type="InterPro" id="IPR009080">
    <property type="entry name" value="tRNAsynth_Ia_anticodon-bd"/>
</dbReference>
<dbReference type="InterPro" id="IPR009008">
    <property type="entry name" value="Val/Leu/Ile-tRNA-synth_edit"/>
</dbReference>
<dbReference type="NCBIfam" id="TIGR00396">
    <property type="entry name" value="leuS_bact"/>
    <property type="match status" value="1"/>
</dbReference>
<dbReference type="PANTHER" id="PTHR43740:SF2">
    <property type="entry name" value="LEUCINE--TRNA LIGASE, MITOCHONDRIAL"/>
    <property type="match status" value="1"/>
</dbReference>
<dbReference type="PANTHER" id="PTHR43740">
    <property type="entry name" value="LEUCYL-TRNA SYNTHETASE"/>
    <property type="match status" value="1"/>
</dbReference>
<dbReference type="Pfam" id="PF08264">
    <property type="entry name" value="Anticodon_1"/>
    <property type="match status" value="1"/>
</dbReference>
<dbReference type="Pfam" id="PF00133">
    <property type="entry name" value="tRNA-synt_1"/>
    <property type="match status" value="2"/>
</dbReference>
<dbReference type="Pfam" id="PF13603">
    <property type="entry name" value="tRNA-synt_1_2"/>
    <property type="match status" value="1"/>
</dbReference>
<dbReference type="Pfam" id="PF09334">
    <property type="entry name" value="tRNA-synt_1g"/>
    <property type="match status" value="1"/>
</dbReference>
<dbReference type="PRINTS" id="PR00985">
    <property type="entry name" value="TRNASYNTHLEU"/>
</dbReference>
<dbReference type="SUPFAM" id="SSF47323">
    <property type="entry name" value="Anticodon-binding domain of a subclass of class I aminoacyl-tRNA synthetases"/>
    <property type="match status" value="1"/>
</dbReference>
<dbReference type="SUPFAM" id="SSF52374">
    <property type="entry name" value="Nucleotidylyl transferase"/>
    <property type="match status" value="1"/>
</dbReference>
<dbReference type="SUPFAM" id="SSF50677">
    <property type="entry name" value="ValRS/IleRS/LeuRS editing domain"/>
    <property type="match status" value="1"/>
</dbReference>
<dbReference type="PROSITE" id="PS00178">
    <property type="entry name" value="AA_TRNA_LIGASE_I"/>
    <property type="match status" value="1"/>
</dbReference>
<accession>Q31AX4</accession>
<organism>
    <name type="scientific">Prochlorococcus marinus (strain MIT 9312)</name>
    <dbReference type="NCBI Taxonomy" id="74546"/>
    <lineage>
        <taxon>Bacteria</taxon>
        <taxon>Bacillati</taxon>
        <taxon>Cyanobacteriota</taxon>
        <taxon>Cyanophyceae</taxon>
        <taxon>Synechococcales</taxon>
        <taxon>Prochlorococcaceae</taxon>
        <taxon>Prochlorococcus</taxon>
    </lineage>
</organism>
<name>SYL_PROM9</name>
<feature type="chain" id="PRO_1000009394" description="Leucine--tRNA ligase">
    <location>
        <begin position="1"/>
        <end position="856"/>
    </location>
</feature>
<feature type="short sequence motif" description="'HIGH' region">
    <location>
        <begin position="53"/>
        <end position="63"/>
    </location>
</feature>
<feature type="short sequence motif" description="'KMSKS' region">
    <location>
        <begin position="622"/>
        <end position="626"/>
    </location>
</feature>
<feature type="binding site" evidence="1">
    <location>
        <position position="625"/>
    </location>
    <ligand>
        <name>ATP</name>
        <dbReference type="ChEBI" id="CHEBI:30616"/>
    </ligand>
</feature>
<proteinExistence type="inferred from homology"/>
<sequence>MISPDKQYETDTNLYNPSEIEKKWQSIWTENNLYKTDELTENSDKFYALSMFPYPSGNLHMGHVRNYVITDLIARFQRFKGKSVLHPMGWDAFGLPAENAAIERGISPSVWTKKNISHMKSQLKLLGLSVDWDREFATCDENYYIWTQYLFLELYKAGLVYQKESEVNWDPIDNTVLANEQVDSEGKSWRSGALVEKKLLKQWFLRITNYADELLKDLEKLDNWPERVKIMQDNWIGKSIGTNINFNINTNPEKKITVFTTRPDTLFGVTYLAISINHSLIKNISDQETIQDIENLKQYLKNNKNNELEKIGIKTSLIAINPVNSEPIPIWVASYVLDEYGTGAVMGVPAHDLRDFEFAKKNNIDIKHVIIKDKSEKTKELDEAYVENGYLINSNHFNGIANTIAKLKISEEGVNNGWAENKIQYRLRDWLISRQRYWGCPIPIVNCKKCGSVPLNQSELPVALPKDIDISANKINALGDNYNWINTTCPKCGIAAKKETDTMDTFMCSSWYFLRYPSSRCSTKPFEKIEINNWLPVDQYVGGVEHAILHLLYARFFTKALRDNELFEIDEPFKKLLTQGMVQSAAYKNNKTGKYISPSDINDLSNPTDPIDNSKLEVLFEKMSKSKYNGIDPESVIKKYGADTARMFILFKAPPEKDLEWGDSDVEGQFRFLSRIWKLYISCSKDINSKSKSYPNKEKTLIKSMNIAIKEITNDISNNQFNTAISELMKFYNSLSNNINDVNNNLKIDALKTFCILLAPFAPHISEEIWLLIGFKNSVHLEHWPSFNAEALKEDSYVLVIQVNGKVRDKININNEMNEDQIKELTLKRPNILKWTQDKEIRKIIIVKGKIMNIVV</sequence>